<feature type="signal peptide" evidence="3">
    <location>
        <begin position="1"/>
        <end position="28"/>
    </location>
</feature>
<feature type="chain" id="PRO_5000242344" description="Probable arabinan endo-1,5-alpha-L-arabinosidase C">
    <location>
        <begin position="29"/>
        <end position="318"/>
    </location>
</feature>
<feature type="active site" description="Proton acceptor" evidence="2">
    <location>
        <position position="30"/>
    </location>
</feature>
<feature type="active site" description="Proton donor" evidence="2">
    <location>
        <position position="196"/>
    </location>
</feature>
<feature type="site" description="Important for catalytic activity, responsible for pKa modulation of the active site Glu and correct orientation of both the proton donor and substrate" evidence="2">
    <location>
        <position position="145"/>
    </location>
</feature>
<feature type="glycosylation site" description="N-linked (GlcNAc...) asparagine" evidence="3">
    <location>
        <position position="72"/>
    </location>
</feature>
<feature type="glycosylation site" description="N-linked (GlcNAc...) asparagine" evidence="3">
    <location>
        <position position="80"/>
    </location>
</feature>
<feature type="glycosylation site" description="N-linked (GlcNAc...) asparagine" evidence="3">
    <location>
        <position position="188"/>
    </location>
</feature>
<feature type="glycosylation site" description="N-linked (GlcNAc...) asparagine" evidence="3">
    <location>
        <position position="277"/>
    </location>
</feature>
<proteinExistence type="inferred from homology"/>
<comment type="function">
    <text evidence="1">Endo-1,5-alpha-L-arabinanase involved in degradation of pectin. Its preferred substrate is linear 1,5-alpha-L-arabinan (By similarity).</text>
</comment>
<comment type="catalytic activity">
    <reaction>
        <text>Endohydrolysis of (1-&gt;5)-alpha-arabinofuranosidic linkages in (1-&gt;5)-arabinans.</text>
        <dbReference type="EC" id="3.2.1.99"/>
    </reaction>
</comment>
<comment type="pathway">
    <text>Glycan metabolism; L-arabinan degradation.</text>
</comment>
<comment type="subcellular location">
    <subcellularLocation>
        <location evidence="1">Secreted</location>
    </subcellularLocation>
</comment>
<comment type="similarity">
    <text evidence="4">Belongs to the glycosyl hydrolase 43 family.</text>
</comment>
<keyword id="KW-0119">Carbohydrate metabolism</keyword>
<keyword id="KW-0325">Glycoprotein</keyword>
<keyword id="KW-0326">Glycosidase</keyword>
<keyword id="KW-0378">Hydrolase</keyword>
<keyword id="KW-0624">Polysaccharide degradation</keyword>
<keyword id="KW-1185">Reference proteome</keyword>
<keyword id="KW-0964">Secreted</keyword>
<keyword id="KW-0732">Signal</keyword>
<keyword id="KW-0858">Xylan degradation</keyword>
<name>ABNC_ASPNC</name>
<organism>
    <name type="scientific">Aspergillus niger (strain ATCC MYA-4892 / CBS 513.88 / FGSC A1513)</name>
    <dbReference type="NCBI Taxonomy" id="425011"/>
    <lineage>
        <taxon>Eukaryota</taxon>
        <taxon>Fungi</taxon>
        <taxon>Dikarya</taxon>
        <taxon>Ascomycota</taxon>
        <taxon>Pezizomycotina</taxon>
        <taxon>Eurotiomycetes</taxon>
        <taxon>Eurotiomycetidae</taxon>
        <taxon>Eurotiales</taxon>
        <taxon>Aspergillaceae</taxon>
        <taxon>Aspergillus</taxon>
        <taxon>Aspergillus subgen. Circumdati</taxon>
    </lineage>
</organism>
<gene>
    <name type="primary">abnC</name>
    <name type="ORF">An02g10550</name>
</gene>
<accession>A5AAG2</accession>
<dbReference type="EC" id="3.2.1.99"/>
<dbReference type="EMBL" id="AM270026">
    <property type="protein sequence ID" value="CAK44404.1"/>
    <property type="molecule type" value="Genomic_DNA"/>
</dbReference>
<dbReference type="RefSeq" id="XP_001400184.1">
    <property type="nucleotide sequence ID" value="XM_001400147.2"/>
</dbReference>
<dbReference type="SMR" id="A5AAG2"/>
<dbReference type="CAZy" id="GH43">
    <property type="family name" value="Glycoside Hydrolase Family 43"/>
</dbReference>
<dbReference type="GlyCosmos" id="A5AAG2">
    <property type="glycosylation" value="4 sites, No reported glycans"/>
</dbReference>
<dbReference type="EnsemblFungi" id="CAK44404">
    <property type="protein sequence ID" value="CAK44404"/>
    <property type="gene ID" value="An02g10550"/>
</dbReference>
<dbReference type="GeneID" id="4979546"/>
<dbReference type="KEGG" id="ang:An02g10550"/>
<dbReference type="VEuPathDB" id="FungiDB:An02g10550"/>
<dbReference type="HOGENOM" id="CLU_009397_5_0_1"/>
<dbReference type="UniPathway" id="UPA00667"/>
<dbReference type="Proteomes" id="UP000006706">
    <property type="component" value="Chromosome 4R"/>
</dbReference>
<dbReference type="GO" id="GO:0005576">
    <property type="term" value="C:extracellular region"/>
    <property type="evidence" value="ECO:0007669"/>
    <property type="project" value="UniProtKB-SubCell"/>
</dbReference>
<dbReference type="GO" id="GO:0046558">
    <property type="term" value="F:arabinan endo-1,5-alpha-L-arabinosidase activity"/>
    <property type="evidence" value="ECO:0007669"/>
    <property type="project" value="UniProtKB-EC"/>
</dbReference>
<dbReference type="GO" id="GO:0031222">
    <property type="term" value="P:arabinan catabolic process"/>
    <property type="evidence" value="ECO:0007669"/>
    <property type="project" value="UniProtKB-UniPathway"/>
</dbReference>
<dbReference type="GO" id="GO:0045493">
    <property type="term" value="P:xylan catabolic process"/>
    <property type="evidence" value="ECO:0007669"/>
    <property type="project" value="UniProtKB-KW"/>
</dbReference>
<dbReference type="CDD" id="cd18831">
    <property type="entry name" value="GH43_AnAbnA-like"/>
    <property type="match status" value="1"/>
</dbReference>
<dbReference type="Gene3D" id="2.115.10.20">
    <property type="entry name" value="Glycosyl hydrolase domain, family 43"/>
    <property type="match status" value="1"/>
</dbReference>
<dbReference type="InterPro" id="IPR050727">
    <property type="entry name" value="GH43_arabinanases"/>
</dbReference>
<dbReference type="InterPro" id="IPR006710">
    <property type="entry name" value="Glyco_hydro_43"/>
</dbReference>
<dbReference type="InterPro" id="IPR016840">
    <property type="entry name" value="Glyco_hydro_43_endo_a_Ara-ase"/>
</dbReference>
<dbReference type="InterPro" id="IPR023296">
    <property type="entry name" value="Glyco_hydro_beta-prop_sf"/>
</dbReference>
<dbReference type="PANTHER" id="PTHR43301">
    <property type="entry name" value="ARABINAN ENDO-1,5-ALPHA-L-ARABINOSIDASE"/>
    <property type="match status" value="1"/>
</dbReference>
<dbReference type="PANTHER" id="PTHR43301:SF7">
    <property type="entry name" value="ARABINAN ENDO-1,5-ALPHA-L-ARABINOSIDASE C"/>
    <property type="match status" value="1"/>
</dbReference>
<dbReference type="Pfam" id="PF04616">
    <property type="entry name" value="Glyco_hydro_43"/>
    <property type="match status" value="1"/>
</dbReference>
<dbReference type="PIRSF" id="PIRSF026534">
    <property type="entry name" value="Endo_alpha-L-arabinosidase"/>
    <property type="match status" value="1"/>
</dbReference>
<dbReference type="SUPFAM" id="SSF75005">
    <property type="entry name" value="Arabinanase/levansucrase/invertase"/>
    <property type="match status" value="1"/>
</dbReference>
<sequence length="318" mass="34047">MLSFVLLLCVALVNAYSDPGACSGTCWAHDPNVIRRVSDGTYFRFSTGGGVHISSASAITGPWTDLGYALPNGSIVTVGNASNLWAPDVHYVDGTYYMYYASSTLGSRDSTIGVATSTTLEADSWTDHGEIGVTSSSSTPYNAIDPNWITIGSTPYLQFGSYWQGLYQVEMTDSLSASSSTPTNLAYNASGNHAIEASYLYEYGGYYYLTFSSGKAQGYTTSLPAQGDEYRIVVCRSKTGTGNFVDKDGVSCLNSGGTTVLASHDYVYGPGGQGIINTTSHGIVVYYHYANKNIGLAVDDYQFGWNTLTWTDGWPVVA</sequence>
<evidence type="ECO:0000250" key="1"/>
<evidence type="ECO:0000250" key="2">
    <source>
        <dbReference type="UniProtKB" id="P94522"/>
    </source>
</evidence>
<evidence type="ECO:0000255" key="3"/>
<evidence type="ECO:0000305" key="4"/>
<reference key="1">
    <citation type="journal article" date="2007" name="Nat. Biotechnol.">
        <title>Genome sequencing and analysis of the versatile cell factory Aspergillus niger CBS 513.88.</title>
        <authorList>
            <person name="Pel H.J."/>
            <person name="de Winde J.H."/>
            <person name="Archer D.B."/>
            <person name="Dyer P.S."/>
            <person name="Hofmann G."/>
            <person name="Schaap P.J."/>
            <person name="Turner G."/>
            <person name="de Vries R.P."/>
            <person name="Albang R."/>
            <person name="Albermann K."/>
            <person name="Andersen M.R."/>
            <person name="Bendtsen J.D."/>
            <person name="Benen J.A.E."/>
            <person name="van den Berg M."/>
            <person name="Breestraat S."/>
            <person name="Caddick M.X."/>
            <person name="Contreras R."/>
            <person name="Cornell M."/>
            <person name="Coutinho P.M."/>
            <person name="Danchin E.G.J."/>
            <person name="Debets A.J.M."/>
            <person name="Dekker P."/>
            <person name="van Dijck P.W.M."/>
            <person name="van Dijk A."/>
            <person name="Dijkhuizen L."/>
            <person name="Driessen A.J.M."/>
            <person name="d'Enfert C."/>
            <person name="Geysens S."/>
            <person name="Goosen C."/>
            <person name="Groot G.S.P."/>
            <person name="de Groot P.W.J."/>
            <person name="Guillemette T."/>
            <person name="Henrissat B."/>
            <person name="Herweijer M."/>
            <person name="van den Hombergh J.P.T.W."/>
            <person name="van den Hondel C.A.M.J.J."/>
            <person name="van der Heijden R.T.J.M."/>
            <person name="van der Kaaij R.M."/>
            <person name="Klis F.M."/>
            <person name="Kools H.J."/>
            <person name="Kubicek C.P."/>
            <person name="van Kuyk P.A."/>
            <person name="Lauber J."/>
            <person name="Lu X."/>
            <person name="van der Maarel M.J.E.C."/>
            <person name="Meulenberg R."/>
            <person name="Menke H."/>
            <person name="Mortimer M.A."/>
            <person name="Nielsen J."/>
            <person name="Oliver S.G."/>
            <person name="Olsthoorn M."/>
            <person name="Pal K."/>
            <person name="van Peij N.N.M.E."/>
            <person name="Ram A.F.J."/>
            <person name="Rinas U."/>
            <person name="Roubos J.A."/>
            <person name="Sagt C.M.J."/>
            <person name="Schmoll M."/>
            <person name="Sun J."/>
            <person name="Ussery D."/>
            <person name="Varga J."/>
            <person name="Vervecken W."/>
            <person name="van de Vondervoort P.J.J."/>
            <person name="Wedler H."/>
            <person name="Woesten H.A.B."/>
            <person name="Zeng A.-P."/>
            <person name="van Ooyen A.J.J."/>
            <person name="Visser J."/>
            <person name="Stam H."/>
        </authorList>
    </citation>
    <scope>NUCLEOTIDE SEQUENCE [LARGE SCALE GENOMIC DNA]</scope>
    <source>
        <strain>ATCC MYA-4892 / CBS 513.88 / FGSC A1513</strain>
    </source>
</reference>
<protein>
    <recommendedName>
        <fullName>Probable arabinan endo-1,5-alpha-L-arabinosidase C</fullName>
        <ecNumber>3.2.1.99</ecNumber>
    </recommendedName>
    <alternativeName>
        <fullName>Endo-1,5-alpha-L-arabinanase C</fullName>
        <shortName>ABN C</shortName>
    </alternativeName>
</protein>